<accession>P63203</accession>
<accession>P37638</accession>
<keyword id="KW-0010">Activator</keyword>
<keyword id="KW-0238">DNA-binding</keyword>
<keyword id="KW-1185">Reference proteome</keyword>
<keyword id="KW-0678">Repressor</keyword>
<keyword id="KW-0804">Transcription</keyword>
<keyword id="KW-0805">Transcription regulation</keyword>
<sequence>MTHVCSVILIRRSFDIYHEQQKISLHNESILLLEKNLADDFAFCSPDTRRLDIDELTVCHYLQNIRQLPRNLGLHSKDRLLINQSPPMPLVTAIFDSFNESGVNSPILSNMLYLSCLSMFSHKKELIPLLFNSISTVSGKVERLISFDIAKRWYLRDIAERMYTSESLIKKKLQDENTCFSKILLASRMSMARRLLELRQIPLHTIAEKCGYSSTSYFINTFRQYYGVTPHQFAQHSPGTFS</sequence>
<organism>
    <name type="scientific">Shigella flexneri</name>
    <dbReference type="NCBI Taxonomy" id="623"/>
    <lineage>
        <taxon>Bacteria</taxon>
        <taxon>Pseudomonadati</taxon>
        <taxon>Pseudomonadota</taxon>
        <taxon>Gammaproteobacteria</taxon>
        <taxon>Enterobacterales</taxon>
        <taxon>Enterobacteriaceae</taxon>
        <taxon>Shigella</taxon>
    </lineage>
</organism>
<evidence type="ECO:0000250" key="1"/>
<evidence type="ECO:0000255" key="2">
    <source>
        <dbReference type="PROSITE-ProRule" id="PRU00593"/>
    </source>
</evidence>
<proteinExistence type="inferred from homology"/>
<dbReference type="EMBL" id="AE005674">
    <property type="protein sequence ID" value="AAN45047.1"/>
    <property type="molecule type" value="Genomic_DNA"/>
</dbReference>
<dbReference type="EMBL" id="AE014073">
    <property type="protein sequence ID" value="AAP19140.1"/>
    <property type="molecule type" value="Genomic_DNA"/>
</dbReference>
<dbReference type="RefSeq" id="WP_000149999.1">
    <property type="nucleotide sequence ID" value="NZ_WPGW01000173.1"/>
</dbReference>
<dbReference type="STRING" id="198214.SF3596"/>
<dbReference type="PaxDb" id="198214-SF3596"/>
<dbReference type="KEGG" id="sfl:SF3596"/>
<dbReference type="KEGG" id="sfx:S4171"/>
<dbReference type="PATRIC" id="fig|198214.7.peg.4246"/>
<dbReference type="HOGENOM" id="CLU_000445_81_4_6"/>
<dbReference type="Proteomes" id="UP000001006">
    <property type="component" value="Chromosome"/>
</dbReference>
<dbReference type="Proteomes" id="UP000002673">
    <property type="component" value="Chromosome"/>
</dbReference>
<dbReference type="GO" id="GO:0005829">
    <property type="term" value="C:cytosol"/>
    <property type="evidence" value="ECO:0007669"/>
    <property type="project" value="TreeGrafter"/>
</dbReference>
<dbReference type="GO" id="GO:0003700">
    <property type="term" value="F:DNA-binding transcription factor activity"/>
    <property type="evidence" value="ECO:0007669"/>
    <property type="project" value="InterPro"/>
</dbReference>
<dbReference type="GO" id="GO:0000976">
    <property type="term" value="F:transcription cis-regulatory region binding"/>
    <property type="evidence" value="ECO:0007669"/>
    <property type="project" value="TreeGrafter"/>
</dbReference>
<dbReference type="FunFam" id="1.10.10.60:FF:000278">
    <property type="entry name" value="HTH-type transcriptional regulator GadW"/>
    <property type="match status" value="1"/>
</dbReference>
<dbReference type="Gene3D" id="1.10.10.60">
    <property type="entry name" value="Homeodomain-like"/>
    <property type="match status" value="1"/>
</dbReference>
<dbReference type="InterPro" id="IPR009057">
    <property type="entry name" value="Homeodomain-like_sf"/>
</dbReference>
<dbReference type="InterPro" id="IPR018060">
    <property type="entry name" value="HTH_AraC"/>
</dbReference>
<dbReference type="InterPro" id="IPR018062">
    <property type="entry name" value="HTH_AraC-typ_CS"/>
</dbReference>
<dbReference type="InterPro" id="IPR020449">
    <property type="entry name" value="Tscrpt_reg_AraC-type_HTH"/>
</dbReference>
<dbReference type="PANTHER" id="PTHR47894">
    <property type="entry name" value="HTH-TYPE TRANSCRIPTIONAL REGULATOR GADX"/>
    <property type="match status" value="1"/>
</dbReference>
<dbReference type="PANTHER" id="PTHR47894:SF4">
    <property type="entry name" value="HTH-TYPE TRANSCRIPTIONAL REGULATOR GADX"/>
    <property type="match status" value="1"/>
</dbReference>
<dbReference type="Pfam" id="PF12833">
    <property type="entry name" value="HTH_18"/>
    <property type="match status" value="1"/>
</dbReference>
<dbReference type="PRINTS" id="PR00032">
    <property type="entry name" value="HTHARAC"/>
</dbReference>
<dbReference type="SMART" id="SM00342">
    <property type="entry name" value="HTH_ARAC"/>
    <property type="match status" value="1"/>
</dbReference>
<dbReference type="SUPFAM" id="SSF46689">
    <property type="entry name" value="Homeodomain-like"/>
    <property type="match status" value="1"/>
</dbReference>
<dbReference type="PROSITE" id="PS00041">
    <property type="entry name" value="HTH_ARAC_FAMILY_1"/>
    <property type="match status" value="1"/>
</dbReference>
<dbReference type="PROSITE" id="PS01124">
    <property type="entry name" value="HTH_ARAC_FAMILY_2"/>
    <property type="match status" value="1"/>
</dbReference>
<feature type="chain" id="PRO_0000194517" description="HTH-type transcriptional regulator GadW">
    <location>
        <begin position="1"/>
        <end position="242"/>
    </location>
</feature>
<feature type="domain" description="HTH araC/xylS-type" evidence="2">
    <location>
        <begin position="139"/>
        <end position="236"/>
    </location>
</feature>
<feature type="DNA-binding region" description="H-T-H motif" evidence="2">
    <location>
        <begin position="156"/>
        <end position="177"/>
    </location>
</feature>
<feature type="DNA-binding region" description="H-T-H motif" evidence="2">
    <location>
        <begin position="203"/>
        <end position="226"/>
    </location>
</feature>
<name>GADW_SHIFL</name>
<comment type="function">
    <text evidence="1">Depending on the conditions (growth phase and medium), acts as a positive or negative regulator of gadA and gadBC. Repression occurs directly or via the repression of the expression of gadX. Activation occurs directly by the binding of GadW to the gadA and gadBC promoters (By similarity).</text>
</comment>
<comment type="subunit">
    <text evidence="1">Homodimer.</text>
</comment>
<comment type="induction">
    <text evidence="1">Expression can be repressed by GadX, depending on the conditions.</text>
</comment>
<protein>
    <recommendedName>
        <fullName>HTH-type transcriptional regulator GadW</fullName>
    </recommendedName>
</protein>
<reference key="1">
    <citation type="journal article" date="2002" name="Nucleic Acids Res.">
        <title>Genome sequence of Shigella flexneri 2a: insights into pathogenicity through comparison with genomes of Escherichia coli K12 and O157.</title>
        <authorList>
            <person name="Jin Q."/>
            <person name="Yuan Z."/>
            <person name="Xu J."/>
            <person name="Wang Y."/>
            <person name="Shen Y."/>
            <person name="Lu W."/>
            <person name="Wang J."/>
            <person name="Liu H."/>
            <person name="Yang J."/>
            <person name="Yang F."/>
            <person name="Zhang X."/>
            <person name="Zhang J."/>
            <person name="Yang G."/>
            <person name="Wu H."/>
            <person name="Qu D."/>
            <person name="Dong J."/>
            <person name="Sun L."/>
            <person name="Xue Y."/>
            <person name="Zhao A."/>
            <person name="Gao Y."/>
            <person name="Zhu J."/>
            <person name="Kan B."/>
            <person name="Ding K."/>
            <person name="Chen S."/>
            <person name="Cheng H."/>
            <person name="Yao Z."/>
            <person name="He B."/>
            <person name="Chen R."/>
            <person name="Ma D."/>
            <person name="Qiang B."/>
            <person name="Wen Y."/>
            <person name="Hou Y."/>
            <person name="Yu J."/>
        </authorList>
    </citation>
    <scope>NUCLEOTIDE SEQUENCE [LARGE SCALE GENOMIC DNA]</scope>
    <source>
        <strain>301 / Serotype 2a</strain>
    </source>
</reference>
<reference key="2">
    <citation type="journal article" date="2003" name="Infect. Immun.">
        <title>Complete genome sequence and comparative genomics of Shigella flexneri serotype 2a strain 2457T.</title>
        <authorList>
            <person name="Wei J."/>
            <person name="Goldberg M.B."/>
            <person name="Burland V."/>
            <person name="Venkatesan M.M."/>
            <person name="Deng W."/>
            <person name="Fournier G."/>
            <person name="Mayhew G.F."/>
            <person name="Plunkett G. III"/>
            <person name="Rose D.J."/>
            <person name="Darling A."/>
            <person name="Mau B."/>
            <person name="Perna N.T."/>
            <person name="Payne S.M."/>
            <person name="Runyen-Janecky L.J."/>
            <person name="Zhou S."/>
            <person name="Schwartz D.C."/>
            <person name="Blattner F.R."/>
        </authorList>
    </citation>
    <scope>NUCLEOTIDE SEQUENCE [LARGE SCALE GENOMIC DNA]</scope>
    <source>
        <strain>ATCC 700930 / 2457T / Serotype 2a</strain>
    </source>
</reference>
<gene>
    <name type="primary">gadW</name>
    <name type="ordered locus">SF3596</name>
    <name type="ordered locus">S4171</name>
</gene>